<feature type="chain" id="PRO_1000142887" description="Large ribosomal subunit protein uL15">
    <location>
        <begin position="1"/>
        <end position="146"/>
    </location>
</feature>
<feature type="region of interest" description="Disordered" evidence="2">
    <location>
        <begin position="1"/>
        <end position="51"/>
    </location>
</feature>
<feature type="compositionally biased region" description="Basic and acidic residues" evidence="2">
    <location>
        <begin position="1"/>
        <end position="13"/>
    </location>
</feature>
<feature type="compositionally biased region" description="Gly residues" evidence="2">
    <location>
        <begin position="23"/>
        <end position="35"/>
    </location>
</feature>
<feature type="compositionally biased region" description="Gly residues" evidence="2">
    <location>
        <begin position="42"/>
        <end position="51"/>
    </location>
</feature>
<sequence length="146" mass="15446">MKLHELKPAEGSRKVRNRVGRGTSSGNGKTSGRGQKGQKARSGGGVRLGFEGGQTPLFRRLPKRGFTNINAKEYAIVNLDQLNVFEDGAEVTPVVLIEAGIVKAEKSGIKILGNGELTKKLTVKAAKFSKSAEEAITAKGGSVEVI</sequence>
<gene>
    <name evidence="1" type="primary">rplO</name>
    <name type="ordered locus">SPCG_0237</name>
</gene>
<comment type="function">
    <text evidence="1">Binds to the 23S rRNA.</text>
</comment>
<comment type="subunit">
    <text evidence="1">Part of the 50S ribosomal subunit.</text>
</comment>
<comment type="similarity">
    <text evidence="1">Belongs to the universal ribosomal protein uL15 family.</text>
</comment>
<proteinExistence type="inferred from homology"/>
<organism>
    <name type="scientific">Streptococcus pneumoniae (strain CGSP14)</name>
    <dbReference type="NCBI Taxonomy" id="516950"/>
    <lineage>
        <taxon>Bacteria</taxon>
        <taxon>Bacillati</taxon>
        <taxon>Bacillota</taxon>
        <taxon>Bacilli</taxon>
        <taxon>Lactobacillales</taxon>
        <taxon>Streptococcaceae</taxon>
        <taxon>Streptococcus</taxon>
    </lineage>
</organism>
<reference key="1">
    <citation type="journal article" date="2009" name="BMC Genomics">
        <title>Genome evolution driven by host adaptations results in a more virulent and antimicrobial-resistant Streptococcus pneumoniae serotype 14.</title>
        <authorList>
            <person name="Ding F."/>
            <person name="Tang P."/>
            <person name="Hsu M.-H."/>
            <person name="Cui P."/>
            <person name="Hu S."/>
            <person name="Yu J."/>
            <person name="Chiu C.-H."/>
        </authorList>
    </citation>
    <scope>NUCLEOTIDE SEQUENCE [LARGE SCALE GENOMIC DNA]</scope>
    <source>
        <strain>CGSP14</strain>
    </source>
</reference>
<evidence type="ECO:0000255" key="1">
    <source>
        <dbReference type="HAMAP-Rule" id="MF_01341"/>
    </source>
</evidence>
<evidence type="ECO:0000256" key="2">
    <source>
        <dbReference type="SAM" id="MobiDB-lite"/>
    </source>
</evidence>
<evidence type="ECO:0000305" key="3"/>
<name>RL15_STRPS</name>
<keyword id="KW-0687">Ribonucleoprotein</keyword>
<keyword id="KW-0689">Ribosomal protein</keyword>
<keyword id="KW-0694">RNA-binding</keyword>
<keyword id="KW-0699">rRNA-binding</keyword>
<accession>B2IS59</accession>
<dbReference type="EMBL" id="CP001033">
    <property type="protein sequence ID" value="ACB89489.1"/>
    <property type="molecule type" value="Genomic_DNA"/>
</dbReference>
<dbReference type="RefSeq" id="WP_000766087.1">
    <property type="nucleotide sequence ID" value="NC_010582.1"/>
</dbReference>
<dbReference type="SMR" id="B2IS59"/>
<dbReference type="GeneID" id="45652290"/>
<dbReference type="KEGG" id="spw:SPCG_0237"/>
<dbReference type="HOGENOM" id="CLU_055188_4_2_9"/>
<dbReference type="GO" id="GO:0022625">
    <property type="term" value="C:cytosolic large ribosomal subunit"/>
    <property type="evidence" value="ECO:0007669"/>
    <property type="project" value="TreeGrafter"/>
</dbReference>
<dbReference type="GO" id="GO:0019843">
    <property type="term" value="F:rRNA binding"/>
    <property type="evidence" value="ECO:0007669"/>
    <property type="project" value="UniProtKB-UniRule"/>
</dbReference>
<dbReference type="GO" id="GO:0003735">
    <property type="term" value="F:structural constituent of ribosome"/>
    <property type="evidence" value="ECO:0007669"/>
    <property type="project" value="InterPro"/>
</dbReference>
<dbReference type="GO" id="GO:0006412">
    <property type="term" value="P:translation"/>
    <property type="evidence" value="ECO:0007669"/>
    <property type="project" value="UniProtKB-UniRule"/>
</dbReference>
<dbReference type="FunFam" id="3.100.10.10:FF:000004">
    <property type="entry name" value="50S ribosomal protein L15"/>
    <property type="match status" value="1"/>
</dbReference>
<dbReference type="Gene3D" id="3.100.10.10">
    <property type="match status" value="1"/>
</dbReference>
<dbReference type="HAMAP" id="MF_01341">
    <property type="entry name" value="Ribosomal_uL15"/>
    <property type="match status" value="1"/>
</dbReference>
<dbReference type="InterPro" id="IPR030878">
    <property type="entry name" value="Ribosomal_uL15"/>
</dbReference>
<dbReference type="InterPro" id="IPR021131">
    <property type="entry name" value="Ribosomal_uL15/eL18"/>
</dbReference>
<dbReference type="InterPro" id="IPR036227">
    <property type="entry name" value="Ribosomal_uL15/eL18_sf"/>
</dbReference>
<dbReference type="InterPro" id="IPR005749">
    <property type="entry name" value="Ribosomal_uL15_bac-type"/>
</dbReference>
<dbReference type="InterPro" id="IPR001196">
    <property type="entry name" value="Ribosomal_uL15_CS"/>
</dbReference>
<dbReference type="NCBIfam" id="TIGR01071">
    <property type="entry name" value="rplO_bact"/>
    <property type="match status" value="1"/>
</dbReference>
<dbReference type="PANTHER" id="PTHR12934">
    <property type="entry name" value="50S RIBOSOMAL PROTEIN L15"/>
    <property type="match status" value="1"/>
</dbReference>
<dbReference type="PANTHER" id="PTHR12934:SF11">
    <property type="entry name" value="LARGE RIBOSOMAL SUBUNIT PROTEIN UL15M"/>
    <property type="match status" value="1"/>
</dbReference>
<dbReference type="Pfam" id="PF00828">
    <property type="entry name" value="Ribosomal_L27A"/>
    <property type="match status" value="1"/>
</dbReference>
<dbReference type="SUPFAM" id="SSF52080">
    <property type="entry name" value="Ribosomal proteins L15p and L18e"/>
    <property type="match status" value="1"/>
</dbReference>
<dbReference type="PROSITE" id="PS00475">
    <property type="entry name" value="RIBOSOMAL_L15"/>
    <property type="match status" value="1"/>
</dbReference>
<protein>
    <recommendedName>
        <fullName evidence="1">Large ribosomal subunit protein uL15</fullName>
    </recommendedName>
    <alternativeName>
        <fullName evidence="3">50S ribosomal protein L15</fullName>
    </alternativeName>
</protein>